<comment type="function">
    <text evidence="1">Major envelope protein that plays a role in the biogenesis of the viral double membrane and in egress of virus from the host cell. Produces the wrapped form of virus that is required for cell-to-cell spread. Acts as a lipase with broad specificity including phospholipase C, phospholipase A, and triacylglycerol lipase activities.</text>
</comment>
<comment type="catalytic activity">
    <reaction evidence="1">
        <text>a 1,2-diacyl-sn-glycero-3-phosphocholine + H2O = a 1,2-diacyl-sn-glycero-3-phosphate + choline + H(+)</text>
        <dbReference type="Rhea" id="RHEA:14445"/>
        <dbReference type="ChEBI" id="CHEBI:15354"/>
        <dbReference type="ChEBI" id="CHEBI:15377"/>
        <dbReference type="ChEBI" id="CHEBI:15378"/>
        <dbReference type="ChEBI" id="CHEBI:57643"/>
        <dbReference type="ChEBI" id="CHEBI:58608"/>
        <dbReference type="EC" id="3.1.4.4"/>
    </reaction>
    <physiologicalReaction direction="left-to-right" evidence="1">
        <dbReference type="Rhea" id="RHEA:14446"/>
    </physiologicalReaction>
</comment>
<comment type="subunit">
    <text evidence="1">Interacts with protein OPG190.</text>
</comment>
<comment type="subcellular location">
    <subcellularLocation>
        <location evidence="1">Virion membrane</location>
        <topology evidence="1">Lipid-anchor</topology>
    </subcellularLocation>
    <subcellularLocation>
        <location evidence="1">Host Golgi apparatus</location>
        <location evidence="1">Host trans-Golgi network</location>
    </subcellularLocation>
    <subcellularLocation>
        <location evidence="1">Host endoplasmic reticulum membrane</location>
        <topology evidence="1">Lipid-anchor</topology>
        <orientation evidence="1">Cytoplasmic side</orientation>
    </subcellularLocation>
    <text evidence="1">Component of the inner side of the enveloped virion (EV) membrane. F13 is associated post-translationally with membranes.</text>
</comment>
<comment type="induction">
    <text evidence="1">Expressed in the intermediate phase of the viral replicative cycle.</text>
</comment>
<comment type="domain">
    <text evidence="1">Late-budding domains (L domains) are short sequence motifs essential for viral particle budding. They recruit proteins of the host ESCRT machinery (Endosomal Sorting Complex Required for Transport) or ESCRT-associated proteins. F13 contains one L domain: a YPPL motif, which might interact with PDCD6IP/AIP1.</text>
</comment>
<comment type="PTM">
    <text evidence="1">Palmitoylated. Attachment of the palmitate moiety is essential for correct intracellular targeting and protein function.</text>
</comment>
<comment type="similarity">
    <text evidence="3">Belongs to the orthopoxvirus OPG057 family.</text>
</comment>
<dbReference type="EC" id="3.1.1.-" evidence="1"/>
<dbReference type="EC" id="3.1.4.4" evidence="1"/>
<dbReference type="EMBL" id="M35027">
    <property type="protein sequence ID" value="AAA48031.1"/>
    <property type="molecule type" value="Genomic_DNA"/>
</dbReference>
<dbReference type="PIR" id="I42507">
    <property type="entry name" value="WMVZCN"/>
</dbReference>
<dbReference type="SMR" id="P20638"/>
<dbReference type="Proteomes" id="UP000008269">
    <property type="component" value="Segment"/>
</dbReference>
<dbReference type="GO" id="GO:0044167">
    <property type="term" value="C:host cell endoplasmic reticulum membrane"/>
    <property type="evidence" value="ECO:0000250"/>
    <property type="project" value="UniProtKB"/>
</dbReference>
<dbReference type="GO" id="GO:0044177">
    <property type="term" value="C:host cell Golgi apparatus"/>
    <property type="evidence" value="ECO:0007669"/>
    <property type="project" value="UniProtKB-SubCell"/>
</dbReference>
<dbReference type="GO" id="GO:0016020">
    <property type="term" value="C:membrane"/>
    <property type="evidence" value="ECO:0007669"/>
    <property type="project" value="UniProtKB-KW"/>
</dbReference>
<dbReference type="GO" id="GO:0019031">
    <property type="term" value="C:viral envelope"/>
    <property type="evidence" value="ECO:0007669"/>
    <property type="project" value="UniProtKB-KW"/>
</dbReference>
<dbReference type="GO" id="GO:0036338">
    <property type="term" value="C:viral membrane"/>
    <property type="evidence" value="ECO:0000250"/>
    <property type="project" value="UniProtKB"/>
</dbReference>
<dbReference type="GO" id="GO:0055036">
    <property type="term" value="C:virion membrane"/>
    <property type="evidence" value="ECO:0007669"/>
    <property type="project" value="UniProtKB-SubCell"/>
</dbReference>
<dbReference type="GO" id="GO:0004630">
    <property type="term" value="F:phospholipase D activity"/>
    <property type="evidence" value="ECO:0007669"/>
    <property type="project" value="RHEA"/>
</dbReference>
<dbReference type="GO" id="GO:0039702">
    <property type="term" value="P:viral budding via host ESCRT complex"/>
    <property type="evidence" value="ECO:0007669"/>
    <property type="project" value="UniProtKB-KW"/>
</dbReference>
<dbReference type="CDD" id="cd09106">
    <property type="entry name" value="PLDc_vPLD3_4_5_like_1"/>
    <property type="match status" value="1"/>
</dbReference>
<dbReference type="CDD" id="cd09107">
    <property type="entry name" value="PLDc_vPLD3_4_5_like_2"/>
    <property type="match status" value="1"/>
</dbReference>
<dbReference type="FunFam" id="3.30.870.10:FF:000040">
    <property type="entry name" value="Envelope phospholipase F13"/>
    <property type="match status" value="1"/>
</dbReference>
<dbReference type="FunFam" id="3.30.870.10:FF:000041">
    <property type="entry name" value="Envelope phospholipase F13"/>
    <property type="match status" value="1"/>
</dbReference>
<dbReference type="Gene3D" id="3.30.870.10">
    <property type="entry name" value="Endonuclease Chain A"/>
    <property type="match status" value="2"/>
</dbReference>
<dbReference type="InterPro" id="IPR050874">
    <property type="entry name" value="Diverse_PLD-related"/>
</dbReference>
<dbReference type="InterPro" id="IPR032803">
    <property type="entry name" value="PLDc_3"/>
</dbReference>
<dbReference type="InterPro" id="IPR001736">
    <property type="entry name" value="PLipase_D/transphosphatidylase"/>
</dbReference>
<dbReference type="PANTHER" id="PTHR10185:SF17">
    <property type="entry name" value="GM01519P-RELATED"/>
    <property type="match status" value="1"/>
</dbReference>
<dbReference type="PANTHER" id="PTHR10185">
    <property type="entry name" value="PHOSPHOLIPASE D - RELATED"/>
    <property type="match status" value="1"/>
</dbReference>
<dbReference type="Pfam" id="PF13918">
    <property type="entry name" value="PLDc_3"/>
    <property type="match status" value="1"/>
</dbReference>
<dbReference type="SMART" id="SM00155">
    <property type="entry name" value="PLDc"/>
    <property type="match status" value="2"/>
</dbReference>
<dbReference type="SUPFAM" id="SSF56024">
    <property type="entry name" value="Phospholipase D/nuclease"/>
    <property type="match status" value="2"/>
</dbReference>
<dbReference type="PROSITE" id="PS50035">
    <property type="entry name" value="PLD"/>
    <property type="match status" value="1"/>
</dbReference>
<gene>
    <name type="primary">OPG057</name>
    <name type="ORF">F13L</name>
</gene>
<organism>
    <name type="scientific">Vaccinia virus (strain Copenhagen)</name>
    <name type="common">VACV</name>
    <dbReference type="NCBI Taxonomy" id="10249"/>
    <lineage>
        <taxon>Viruses</taxon>
        <taxon>Varidnaviria</taxon>
        <taxon>Bamfordvirae</taxon>
        <taxon>Nucleocytoviricota</taxon>
        <taxon>Pokkesviricetes</taxon>
        <taxon>Chitovirales</taxon>
        <taxon>Poxviridae</taxon>
        <taxon>Chordopoxvirinae</taxon>
        <taxon>Orthopoxvirus</taxon>
        <taxon>Vaccinia virus</taxon>
    </lineage>
</organism>
<evidence type="ECO:0000250" key="1">
    <source>
        <dbReference type="UniProtKB" id="P04021"/>
    </source>
</evidence>
<evidence type="ECO:0000255" key="2">
    <source>
        <dbReference type="PROSITE-ProRule" id="PRU00153"/>
    </source>
</evidence>
<evidence type="ECO:0000305" key="3"/>
<feature type="chain" id="PRO_0000099195" description="Envelope phospholipase OPG057">
    <location>
        <begin position="1"/>
        <end position="372"/>
    </location>
</feature>
<feature type="domain" description="PLD phosphodiesterase" evidence="2">
    <location>
        <begin position="307"/>
        <end position="334"/>
    </location>
</feature>
<feature type="short sequence motif" description="YPPL">
    <location>
        <begin position="153"/>
        <end position="156"/>
    </location>
</feature>
<feature type="lipid moiety-binding region" description="S-palmitoyl cysteine; by host" evidence="1">
    <location>
        <position position="185"/>
    </location>
</feature>
<feature type="lipid moiety-binding region" description="S-palmitoyl cysteine; by host" evidence="1">
    <location>
        <position position="186"/>
    </location>
</feature>
<protein>
    <recommendedName>
        <fullName>Envelope phospholipase OPG057</fullName>
        <ecNumber evidence="1">3.1.1.-</ecNumber>
        <ecNumber evidence="1">3.1.4.4</ecNumber>
    </recommendedName>
    <alternativeName>
        <fullName>37 kDa protein</fullName>
    </alternativeName>
    <alternativeName>
        <fullName>Envelope phospholipase F13</fullName>
    </alternativeName>
    <alternativeName>
        <fullName>Envelope protein F13</fullName>
    </alternativeName>
    <alternativeName>
        <fullName>Palmitoylated EV membrane protein</fullName>
    </alternativeName>
    <alternativeName>
        <fullName>p37K</fullName>
    </alternativeName>
</protein>
<proteinExistence type="inferred from homology"/>
<accession>P20638</accession>
<reference key="1">
    <citation type="journal article" date="1990" name="Virology">
        <title>The complete DNA sequence of vaccinia virus.</title>
        <authorList>
            <person name="Goebel S.J."/>
            <person name="Johnson G.P."/>
            <person name="Perkus M.E."/>
            <person name="Davis S.W."/>
            <person name="Winslow J.P."/>
            <person name="Paoletti E."/>
        </authorList>
    </citation>
    <scope>NUCLEOTIDE SEQUENCE [LARGE SCALE GENOMIC DNA]</scope>
</reference>
<reference key="2">
    <citation type="journal article" date="1990" name="Virology">
        <title>Appendix to 'The complete DNA sequence of vaccinia virus'.</title>
        <authorList>
            <person name="Goebel S.J."/>
            <person name="Johnson G.P."/>
            <person name="Perkus M.E."/>
            <person name="Davis S.W."/>
            <person name="Winslow J.P."/>
            <person name="Paoletti E."/>
        </authorList>
    </citation>
    <scope>COMPLETE GENOME</scope>
</reference>
<keyword id="KW-1038">Host endoplasmic reticulum</keyword>
<keyword id="KW-1040">Host Golgi apparatus</keyword>
<keyword id="KW-1043">Host membrane</keyword>
<keyword id="KW-0945">Host-virus interaction</keyword>
<keyword id="KW-0378">Hydrolase</keyword>
<keyword id="KW-0426">Late protein</keyword>
<keyword id="KW-0449">Lipoprotein</keyword>
<keyword id="KW-0472">Membrane</keyword>
<keyword id="KW-0564">Palmitate</keyword>
<keyword id="KW-1185">Reference proteome</keyword>
<keyword id="KW-1198">Viral budding</keyword>
<keyword id="KW-1187">Viral budding via the host ESCRT complexes</keyword>
<keyword id="KW-0261">Viral envelope protein</keyword>
<keyword id="KW-1188">Viral release from host cell</keyword>
<keyword id="KW-0946">Virion</keyword>
<organismHost>
    <name type="scientific">Homo sapiens</name>
    <name type="common">Human</name>
    <dbReference type="NCBI Taxonomy" id="9606"/>
</organismHost>
<sequence length="372" mass="41824">MWPFASVPAGAKCRLVETLPENMDFRSDHLTTFECFNEIITLAKKYIYIASFCCNPLSTTRGALIFDKLKEASEKGIKIIVLLDERGKRNLGELQSHCPDINFITVNIDKKNNVGLLLGCFWVSDDERCYVGNASFTGGSIHTIKTLGVYSDYPPLATDLRRRFDTFKAFNSAKNSWLNLCSAACCLPVSTAYHIKNPIGGVFFTDSPEHLLGYSRDLDTDVVIDKLRSAKTSIDIEHLAIVPTTRVDGNSYYWPDIYNSIIEAAINRGVKIRLLVGNWDKNDVYSMATARSLDALCVQNDLSVKVFTIQNNTKLLIVDDEYVHITSANFDGTHYQNHGFVSFNSIDKQLVSEAKKIFERDWVSSHSKSLKI</sequence>
<name>PG057_VACCC</name>